<gene>
    <name evidence="1" type="primary">ftsZ</name>
    <name type="ordered locus">SAS1120</name>
</gene>
<feature type="chain" id="PRO_0000114383" description="Cell division protein FtsZ">
    <location>
        <begin position="1"/>
        <end position="390"/>
    </location>
</feature>
<feature type="region of interest" description="Disordered" evidence="2">
    <location>
        <begin position="315"/>
        <end position="390"/>
    </location>
</feature>
<feature type="compositionally biased region" description="Polar residues" evidence="2">
    <location>
        <begin position="326"/>
        <end position="360"/>
    </location>
</feature>
<feature type="compositionally biased region" description="Basic and acidic residues" evidence="2">
    <location>
        <begin position="361"/>
        <end position="384"/>
    </location>
</feature>
<feature type="binding site" evidence="1">
    <location>
        <begin position="21"/>
        <end position="25"/>
    </location>
    <ligand>
        <name>GTP</name>
        <dbReference type="ChEBI" id="CHEBI:37565"/>
    </ligand>
</feature>
<feature type="binding site" evidence="1">
    <location>
        <begin position="108"/>
        <end position="110"/>
    </location>
    <ligand>
        <name>GTP</name>
        <dbReference type="ChEBI" id="CHEBI:37565"/>
    </ligand>
</feature>
<feature type="binding site" evidence="1">
    <location>
        <position position="139"/>
    </location>
    <ligand>
        <name>GTP</name>
        <dbReference type="ChEBI" id="CHEBI:37565"/>
    </ligand>
</feature>
<feature type="binding site" evidence="1">
    <location>
        <position position="143"/>
    </location>
    <ligand>
        <name>GTP</name>
        <dbReference type="ChEBI" id="CHEBI:37565"/>
    </ligand>
</feature>
<feature type="binding site" evidence="1">
    <location>
        <position position="187"/>
    </location>
    <ligand>
        <name>GTP</name>
        <dbReference type="ChEBI" id="CHEBI:37565"/>
    </ligand>
</feature>
<evidence type="ECO:0000255" key="1">
    <source>
        <dbReference type="HAMAP-Rule" id="MF_00909"/>
    </source>
</evidence>
<evidence type="ECO:0000256" key="2">
    <source>
        <dbReference type="SAM" id="MobiDB-lite"/>
    </source>
</evidence>
<organism>
    <name type="scientific">Staphylococcus aureus (strain MSSA476)</name>
    <dbReference type="NCBI Taxonomy" id="282459"/>
    <lineage>
        <taxon>Bacteria</taxon>
        <taxon>Bacillati</taxon>
        <taxon>Bacillota</taxon>
        <taxon>Bacilli</taxon>
        <taxon>Bacillales</taxon>
        <taxon>Staphylococcaceae</taxon>
        <taxon>Staphylococcus</taxon>
    </lineage>
</organism>
<comment type="function">
    <text evidence="1">Essential cell division protein that forms a contractile ring structure (Z ring) at the future cell division site. The regulation of the ring assembly controls the timing and the location of cell division. One of the functions of the FtsZ ring is to recruit other cell division proteins to the septum to produce a new cell wall between the dividing cells. Binds GTP and shows GTPase activity.</text>
</comment>
<comment type="subunit">
    <text evidence="1">Homodimer. Polymerizes to form a dynamic ring structure in a strictly GTP-dependent manner. Interacts directly with several other division proteins.</text>
</comment>
<comment type="subcellular location">
    <subcellularLocation>
        <location evidence="1">Cytoplasm</location>
    </subcellularLocation>
    <text evidence="1">Assembles at midcell at the inner surface of the cytoplasmic membrane.</text>
</comment>
<comment type="similarity">
    <text evidence="1">Belongs to the FtsZ family.</text>
</comment>
<name>FTSZ_STAAS</name>
<accession>Q6GA26</accession>
<proteinExistence type="inferred from homology"/>
<dbReference type="EMBL" id="BX571857">
    <property type="protein sequence ID" value="CAG42897.1"/>
    <property type="molecule type" value="Genomic_DNA"/>
</dbReference>
<dbReference type="RefSeq" id="WP_000888997.1">
    <property type="nucleotide sequence ID" value="NC_002953.3"/>
</dbReference>
<dbReference type="SMR" id="Q6GA26"/>
<dbReference type="GeneID" id="98345502"/>
<dbReference type="KEGG" id="sas:SAS1120"/>
<dbReference type="HOGENOM" id="CLU_024865_0_1_9"/>
<dbReference type="GO" id="GO:0032153">
    <property type="term" value="C:cell division site"/>
    <property type="evidence" value="ECO:0007669"/>
    <property type="project" value="UniProtKB-UniRule"/>
</dbReference>
<dbReference type="GO" id="GO:0005737">
    <property type="term" value="C:cytoplasm"/>
    <property type="evidence" value="ECO:0007669"/>
    <property type="project" value="UniProtKB-SubCell"/>
</dbReference>
<dbReference type="GO" id="GO:0005525">
    <property type="term" value="F:GTP binding"/>
    <property type="evidence" value="ECO:0007669"/>
    <property type="project" value="UniProtKB-UniRule"/>
</dbReference>
<dbReference type="GO" id="GO:0003924">
    <property type="term" value="F:GTPase activity"/>
    <property type="evidence" value="ECO:0007669"/>
    <property type="project" value="UniProtKB-UniRule"/>
</dbReference>
<dbReference type="GO" id="GO:0000917">
    <property type="term" value="P:division septum assembly"/>
    <property type="evidence" value="ECO:0007669"/>
    <property type="project" value="UniProtKB-KW"/>
</dbReference>
<dbReference type="GO" id="GO:0043093">
    <property type="term" value="P:FtsZ-dependent cytokinesis"/>
    <property type="evidence" value="ECO:0007669"/>
    <property type="project" value="UniProtKB-UniRule"/>
</dbReference>
<dbReference type="GO" id="GO:0051258">
    <property type="term" value="P:protein polymerization"/>
    <property type="evidence" value="ECO:0007669"/>
    <property type="project" value="UniProtKB-UniRule"/>
</dbReference>
<dbReference type="CDD" id="cd02201">
    <property type="entry name" value="FtsZ_type1"/>
    <property type="match status" value="1"/>
</dbReference>
<dbReference type="FunFam" id="3.30.1330.20:FF:000005">
    <property type="entry name" value="Cell division protein FtsZ"/>
    <property type="match status" value="1"/>
</dbReference>
<dbReference type="FunFam" id="3.40.50.1440:FF:000023">
    <property type="entry name" value="Cell division protein FtsZ"/>
    <property type="match status" value="1"/>
</dbReference>
<dbReference type="Gene3D" id="3.30.1330.20">
    <property type="entry name" value="Tubulin/FtsZ, C-terminal domain"/>
    <property type="match status" value="1"/>
</dbReference>
<dbReference type="Gene3D" id="3.40.50.1440">
    <property type="entry name" value="Tubulin/FtsZ, GTPase domain"/>
    <property type="match status" value="1"/>
</dbReference>
<dbReference type="HAMAP" id="MF_00909">
    <property type="entry name" value="FtsZ"/>
    <property type="match status" value="1"/>
</dbReference>
<dbReference type="InterPro" id="IPR000158">
    <property type="entry name" value="Cell_div_FtsZ"/>
</dbReference>
<dbReference type="InterPro" id="IPR020805">
    <property type="entry name" value="Cell_div_FtsZ_CS"/>
</dbReference>
<dbReference type="InterPro" id="IPR045061">
    <property type="entry name" value="FtsZ/CetZ"/>
</dbReference>
<dbReference type="InterPro" id="IPR024757">
    <property type="entry name" value="FtsZ_C"/>
</dbReference>
<dbReference type="InterPro" id="IPR008280">
    <property type="entry name" value="Tub_FtsZ_C"/>
</dbReference>
<dbReference type="InterPro" id="IPR037103">
    <property type="entry name" value="Tubulin/FtsZ-like_C"/>
</dbReference>
<dbReference type="InterPro" id="IPR018316">
    <property type="entry name" value="Tubulin/FtsZ_2-layer-sand-dom"/>
</dbReference>
<dbReference type="InterPro" id="IPR036525">
    <property type="entry name" value="Tubulin/FtsZ_GTPase_sf"/>
</dbReference>
<dbReference type="InterPro" id="IPR003008">
    <property type="entry name" value="Tubulin_FtsZ_GTPase"/>
</dbReference>
<dbReference type="NCBIfam" id="TIGR00065">
    <property type="entry name" value="ftsZ"/>
    <property type="match status" value="1"/>
</dbReference>
<dbReference type="PANTHER" id="PTHR30314">
    <property type="entry name" value="CELL DIVISION PROTEIN FTSZ-RELATED"/>
    <property type="match status" value="1"/>
</dbReference>
<dbReference type="PANTHER" id="PTHR30314:SF3">
    <property type="entry name" value="MITOCHONDRIAL DIVISION PROTEIN FSZA"/>
    <property type="match status" value="1"/>
</dbReference>
<dbReference type="Pfam" id="PF12327">
    <property type="entry name" value="FtsZ_C"/>
    <property type="match status" value="1"/>
</dbReference>
<dbReference type="Pfam" id="PF00091">
    <property type="entry name" value="Tubulin"/>
    <property type="match status" value="1"/>
</dbReference>
<dbReference type="PRINTS" id="PR00423">
    <property type="entry name" value="CELLDVISFTSZ"/>
</dbReference>
<dbReference type="SMART" id="SM00864">
    <property type="entry name" value="Tubulin"/>
    <property type="match status" value="1"/>
</dbReference>
<dbReference type="SMART" id="SM00865">
    <property type="entry name" value="Tubulin_C"/>
    <property type="match status" value="1"/>
</dbReference>
<dbReference type="SUPFAM" id="SSF55307">
    <property type="entry name" value="Tubulin C-terminal domain-like"/>
    <property type="match status" value="1"/>
</dbReference>
<dbReference type="SUPFAM" id="SSF52490">
    <property type="entry name" value="Tubulin nucleotide-binding domain-like"/>
    <property type="match status" value="1"/>
</dbReference>
<dbReference type="PROSITE" id="PS01134">
    <property type="entry name" value="FTSZ_1"/>
    <property type="match status" value="1"/>
</dbReference>
<dbReference type="PROSITE" id="PS01135">
    <property type="entry name" value="FTSZ_2"/>
    <property type="match status" value="1"/>
</dbReference>
<reference key="1">
    <citation type="journal article" date="2004" name="Proc. Natl. Acad. Sci. U.S.A.">
        <title>Complete genomes of two clinical Staphylococcus aureus strains: evidence for the rapid evolution of virulence and drug resistance.</title>
        <authorList>
            <person name="Holden M.T.G."/>
            <person name="Feil E.J."/>
            <person name="Lindsay J.A."/>
            <person name="Peacock S.J."/>
            <person name="Day N.P.J."/>
            <person name="Enright M.C."/>
            <person name="Foster T.J."/>
            <person name="Moore C.E."/>
            <person name="Hurst L."/>
            <person name="Atkin R."/>
            <person name="Barron A."/>
            <person name="Bason N."/>
            <person name="Bentley S.D."/>
            <person name="Chillingworth C."/>
            <person name="Chillingworth T."/>
            <person name="Churcher C."/>
            <person name="Clark L."/>
            <person name="Corton C."/>
            <person name="Cronin A."/>
            <person name="Doggett J."/>
            <person name="Dowd L."/>
            <person name="Feltwell T."/>
            <person name="Hance Z."/>
            <person name="Harris B."/>
            <person name="Hauser H."/>
            <person name="Holroyd S."/>
            <person name="Jagels K."/>
            <person name="James K.D."/>
            <person name="Lennard N."/>
            <person name="Line A."/>
            <person name="Mayes R."/>
            <person name="Moule S."/>
            <person name="Mungall K."/>
            <person name="Ormond D."/>
            <person name="Quail M.A."/>
            <person name="Rabbinowitsch E."/>
            <person name="Rutherford K.M."/>
            <person name="Sanders M."/>
            <person name="Sharp S."/>
            <person name="Simmonds M."/>
            <person name="Stevens K."/>
            <person name="Whitehead S."/>
            <person name="Barrell B.G."/>
            <person name="Spratt B.G."/>
            <person name="Parkhill J."/>
        </authorList>
    </citation>
    <scope>NUCLEOTIDE SEQUENCE [LARGE SCALE GENOMIC DNA]</scope>
    <source>
        <strain>MSSA476</strain>
    </source>
</reference>
<sequence>MLEFEQGFNHLATLKVIGVGGGGNNAVNRMIDHGMNNVEFIAINTDGQALNLSKAESKIQIGEKLTRGLGAGANPEIGKKAAEESREQIEDAIQGADMVFVTSGMGGGTGTGAAPVVAKIAKEMGALTVGVVTRPFSFEGRKRQTQAAAGVEAMKAAVDTLIVIPNDRLLDIVDKSTPMMEAFKEADNVLRQGVQGISDLIAVSGEVNLDFADVKTIMSNQGSALMGIGVSSGENRAVEAAKKAISSPLLETSIVGAQGVLMNITGGESLSLFEAQEAADIVQDAADEDVNMIFGTVINPELQDEIVVTVIATGFDDKPTSHGRKSGSTGFGTSVNTSSNATSKDESFTSNSSNAQATDSVSERTHTTKEDDIPSFIRNREERRSRRTRR</sequence>
<keyword id="KW-0131">Cell cycle</keyword>
<keyword id="KW-0132">Cell division</keyword>
<keyword id="KW-0963">Cytoplasm</keyword>
<keyword id="KW-0342">GTP-binding</keyword>
<keyword id="KW-0547">Nucleotide-binding</keyword>
<keyword id="KW-0717">Septation</keyword>
<protein>
    <recommendedName>
        <fullName evidence="1">Cell division protein FtsZ</fullName>
    </recommendedName>
</protein>